<accession>Q4K519</accession>
<gene>
    <name evidence="2" type="primary">tuf1</name>
    <name type="ordered locus">PFL_5584</name>
</gene>
<gene>
    <name evidence="2" type="primary">tuf2</name>
    <name type="ordered locus">PFL_5597</name>
</gene>
<evidence type="ECO:0000250" key="1"/>
<evidence type="ECO:0000255" key="2">
    <source>
        <dbReference type="HAMAP-Rule" id="MF_00118"/>
    </source>
</evidence>
<keyword id="KW-0963">Cytoplasm</keyword>
<keyword id="KW-0251">Elongation factor</keyword>
<keyword id="KW-0342">GTP-binding</keyword>
<keyword id="KW-0378">Hydrolase</keyword>
<keyword id="KW-0460">Magnesium</keyword>
<keyword id="KW-0479">Metal-binding</keyword>
<keyword id="KW-0547">Nucleotide-binding</keyword>
<keyword id="KW-0648">Protein biosynthesis</keyword>
<proteinExistence type="inferred from homology"/>
<sequence>MAKEKFERNKPHVNVGTIGHVDHGKTTLTAALTRVCSEVFGSARVDFDKIDSAPEEKARGITINTAHVEYDSNIRHYAHVDCPGHADYVKNMITGAAQMDGAILVCSAADGPMPQTREHILLSRQVGVPYIVVFLNKADMVDDAELLELVEMEVRDLLSTYDFPGDDTPIIIGSALMALNGQDDNEMGTTAVKRLVETLDTYIPEPERAIDKPFLMPIEDVFSISGRGTVVTGRVERGIVRIQEEVEIVGLRDTQKTTCTGVEMFRKLLDEGRAGENCGVLLRGTKRDDVERGQVLVKPGTVKPHTKFTAEVYVLSKEEGGRHTPFFKGYRPQFYFRTTDVTGNCELPEGVEMVMPGDNIQMTVTLIKTIAMEDGLRFAIREGGRTVGAGVVAKVIE</sequence>
<feature type="chain" id="PRO_0000337473" description="Elongation factor Tu">
    <location>
        <begin position="1"/>
        <end position="397"/>
    </location>
</feature>
<feature type="domain" description="tr-type G">
    <location>
        <begin position="10"/>
        <end position="207"/>
    </location>
</feature>
<feature type="region of interest" description="G1" evidence="1">
    <location>
        <begin position="19"/>
        <end position="26"/>
    </location>
</feature>
<feature type="region of interest" description="G2" evidence="1">
    <location>
        <begin position="60"/>
        <end position="64"/>
    </location>
</feature>
<feature type="region of interest" description="G3" evidence="1">
    <location>
        <begin position="81"/>
        <end position="84"/>
    </location>
</feature>
<feature type="region of interest" description="G4" evidence="1">
    <location>
        <begin position="136"/>
        <end position="139"/>
    </location>
</feature>
<feature type="region of interest" description="G5" evidence="1">
    <location>
        <begin position="174"/>
        <end position="176"/>
    </location>
</feature>
<feature type="binding site" evidence="2">
    <location>
        <begin position="19"/>
        <end position="26"/>
    </location>
    <ligand>
        <name>GTP</name>
        <dbReference type="ChEBI" id="CHEBI:37565"/>
    </ligand>
</feature>
<feature type="binding site" evidence="2">
    <location>
        <position position="26"/>
    </location>
    <ligand>
        <name>Mg(2+)</name>
        <dbReference type="ChEBI" id="CHEBI:18420"/>
    </ligand>
</feature>
<feature type="binding site" evidence="2">
    <location>
        <begin position="81"/>
        <end position="85"/>
    </location>
    <ligand>
        <name>GTP</name>
        <dbReference type="ChEBI" id="CHEBI:37565"/>
    </ligand>
</feature>
<feature type="binding site" evidence="2">
    <location>
        <begin position="136"/>
        <end position="139"/>
    </location>
    <ligand>
        <name>GTP</name>
        <dbReference type="ChEBI" id="CHEBI:37565"/>
    </ligand>
</feature>
<protein>
    <recommendedName>
        <fullName evidence="2">Elongation factor Tu</fullName>
        <shortName evidence="2">EF-Tu</shortName>
        <ecNumber evidence="2">3.6.5.3</ecNumber>
    </recommendedName>
</protein>
<reference key="1">
    <citation type="journal article" date="2005" name="Nat. Biotechnol.">
        <title>Complete genome sequence of the plant commensal Pseudomonas fluorescens Pf-5.</title>
        <authorList>
            <person name="Paulsen I.T."/>
            <person name="Press C.M."/>
            <person name="Ravel J."/>
            <person name="Kobayashi D.Y."/>
            <person name="Myers G.S.A."/>
            <person name="Mavrodi D.V."/>
            <person name="DeBoy R.T."/>
            <person name="Seshadri R."/>
            <person name="Ren Q."/>
            <person name="Madupu R."/>
            <person name="Dodson R.J."/>
            <person name="Durkin A.S."/>
            <person name="Brinkac L.M."/>
            <person name="Daugherty S.C."/>
            <person name="Sullivan S.A."/>
            <person name="Rosovitz M.J."/>
            <person name="Gwinn M.L."/>
            <person name="Zhou L."/>
            <person name="Schneider D.J."/>
            <person name="Cartinhour S.W."/>
            <person name="Nelson W.C."/>
            <person name="Weidman J."/>
            <person name="Watkins K."/>
            <person name="Tran K."/>
            <person name="Khouri H."/>
            <person name="Pierson E.A."/>
            <person name="Pierson L.S. III"/>
            <person name="Thomashow L.S."/>
            <person name="Loper J.E."/>
        </authorList>
    </citation>
    <scope>NUCLEOTIDE SEQUENCE [LARGE SCALE GENOMIC DNA]</scope>
    <source>
        <strain>ATCC BAA-477 / NRRL B-23932 / Pf-5</strain>
    </source>
</reference>
<comment type="function">
    <text evidence="2">GTP hydrolase that promotes the GTP-dependent binding of aminoacyl-tRNA to the A-site of ribosomes during protein biosynthesis.</text>
</comment>
<comment type="catalytic activity">
    <reaction evidence="2">
        <text>GTP + H2O = GDP + phosphate + H(+)</text>
        <dbReference type="Rhea" id="RHEA:19669"/>
        <dbReference type="ChEBI" id="CHEBI:15377"/>
        <dbReference type="ChEBI" id="CHEBI:15378"/>
        <dbReference type="ChEBI" id="CHEBI:37565"/>
        <dbReference type="ChEBI" id="CHEBI:43474"/>
        <dbReference type="ChEBI" id="CHEBI:58189"/>
        <dbReference type="EC" id="3.6.5.3"/>
    </reaction>
    <physiologicalReaction direction="left-to-right" evidence="2">
        <dbReference type="Rhea" id="RHEA:19670"/>
    </physiologicalReaction>
</comment>
<comment type="subunit">
    <text evidence="2">Monomer.</text>
</comment>
<comment type="subcellular location">
    <subcellularLocation>
        <location evidence="2">Cytoplasm</location>
    </subcellularLocation>
</comment>
<comment type="similarity">
    <text evidence="2">Belongs to the TRAFAC class translation factor GTPase superfamily. Classic translation factor GTPase family. EF-Tu/EF-1A subfamily.</text>
</comment>
<organism>
    <name type="scientific">Pseudomonas fluorescens (strain ATCC BAA-477 / NRRL B-23932 / Pf-5)</name>
    <dbReference type="NCBI Taxonomy" id="220664"/>
    <lineage>
        <taxon>Bacteria</taxon>
        <taxon>Pseudomonadati</taxon>
        <taxon>Pseudomonadota</taxon>
        <taxon>Gammaproteobacteria</taxon>
        <taxon>Pseudomonadales</taxon>
        <taxon>Pseudomonadaceae</taxon>
        <taxon>Pseudomonas</taxon>
    </lineage>
</organism>
<name>EFTU_PSEF5</name>
<dbReference type="EC" id="3.6.5.3" evidence="2"/>
<dbReference type="EMBL" id="CP000076">
    <property type="protein sequence ID" value="AAY94789.1"/>
    <property type="molecule type" value="Genomic_DNA"/>
</dbReference>
<dbReference type="EMBL" id="CP000076">
    <property type="protein sequence ID" value="AAY94799.1"/>
    <property type="molecule type" value="Genomic_DNA"/>
</dbReference>
<dbReference type="SMR" id="Q4K519"/>
<dbReference type="STRING" id="220664.PFL_5584"/>
<dbReference type="KEGG" id="pfl:PFL_5584"/>
<dbReference type="KEGG" id="pfl:PFL_5597"/>
<dbReference type="PATRIC" id="fig|220664.5.peg.5715"/>
<dbReference type="eggNOG" id="COG0050">
    <property type="taxonomic scope" value="Bacteria"/>
</dbReference>
<dbReference type="HOGENOM" id="CLU_007265_0_0_6"/>
<dbReference type="Proteomes" id="UP000008540">
    <property type="component" value="Chromosome"/>
</dbReference>
<dbReference type="GO" id="GO:0005829">
    <property type="term" value="C:cytosol"/>
    <property type="evidence" value="ECO:0007669"/>
    <property type="project" value="TreeGrafter"/>
</dbReference>
<dbReference type="GO" id="GO:0005525">
    <property type="term" value="F:GTP binding"/>
    <property type="evidence" value="ECO:0007669"/>
    <property type="project" value="UniProtKB-UniRule"/>
</dbReference>
<dbReference type="GO" id="GO:0003924">
    <property type="term" value="F:GTPase activity"/>
    <property type="evidence" value="ECO:0007669"/>
    <property type="project" value="InterPro"/>
</dbReference>
<dbReference type="GO" id="GO:0097216">
    <property type="term" value="F:guanosine tetraphosphate binding"/>
    <property type="evidence" value="ECO:0007669"/>
    <property type="project" value="UniProtKB-ARBA"/>
</dbReference>
<dbReference type="GO" id="GO:0003746">
    <property type="term" value="F:translation elongation factor activity"/>
    <property type="evidence" value="ECO:0007669"/>
    <property type="project" value="UniProtKB-UniRule"/>
</dbReference>
<dbReference type="CDD" id="cd01884">
    <property type="entry name" value="EF_Tu"/>
    <property type="match status" value="1"/>
</dbReference>
<dbReference type="CDD" id="cd03697">
    <property type="entry name" value="EFTU_II"/>
    <property type="match status" value="1"/>
</dbReference>
<dbReference type="CDD" id="cd03707">
    <property type="entry name" value="EFTU_III"/>
    <property type="match status" value="1"/>
</dbReference>
<dbReference type="FunFam" id="2.40.30.10:FF:000001">
    <property type="entry name" value="Elongation factor Tu"/>
    <property type="match status" value="1"/>
</dbReference>
<dbReference type="FunFam" id="3.40.50.300:FF:000003">
    <property type="entry name" value="Elongation factor Tu"/>
    <property type="match status" value="1"/>
</dbReference>
<dbReference type="Gene3D" id="3.40.50.300">
    <property type="entry name" value="P-loop containing nucleotide triphosphate hydrolases"/>
    <property type="match status" value="1"/>
</dbReference>
<dbReference type="Gene3D" id="2.40.30.10">
    <property type="entry name" value="Translation factors"/>
    <property type="match status" value="2"/>
</dbReference>
<dbReference type="HAMAP" id="MF_00118_B">
    <property type="entry name" value="EF_Tu_B"/>
    <property type="match status" value="1"/>
</dbReference>
<dbReference type="InterPro" id="IPR041709">
    <property type="entry name" value="EF-Tu_GTP-bd"/>
</dbReference>
<dbReference type="InterPro" id="IPR050055">
    <property type="entry name" value="EF-Tu_GTPase"/>
</dbReference>
<dbReference type="InterPro" id="IPR004161">
    <property type="entry name" value="EFTu-like_2"/>
</dbReference>
<dbReference type="InterPro" id="IPR033720">
    <property type="entry name" value="EFTU_2"/>
</dbReference>
<dbReference type="InterPro" id="IPR031157">
    <property type="entry name" value="G_TR_CS"/>
</dbReference>
<dbReference type="InterPro" id="IPR027417">
    <property type="entry name" value="P-loop_NTPase"/>
</dbReference>
<dbReference type="InterPro" id="IPR005225">
    <property type="entry name" value="Small_GTP-bd"/>
</dbReference>
<dbReference type="InterPro" id="IPR000795">
    <property type="entry name" value="T_Tr_GTP-bd_dom"/>
</dbReference>
<dbReference type="InterPro" id="IPR009000">
    <property type="entry name" value="Transl_B-barrel_sf"/>
</dbReference>
<dbReference type="InterPro" id="IPR009001">
    <property type="entry name" value="Transl_elong_EF1A/Init_IF2_C"/>
</dbReference>
<dbReference type="InterPro" id="IPR004541">
    <property type="entry name" value="Transl_elong_EFTu/EF1A_bac/org"/>
</dbReference>
<dbReference type="InterPro" id="IPR004160">
    <property type="entry name" value="Transl_elong_EFTu/EF1A_C"/>
</dbReference>
<dbReference type="NCBIfam" id="TIGR00485">
    <property type="entry name" value="EF-Tu"/>
    <property type="match status" value="1"/>
</dbReference>
<dbReference type="NCBIfam" id="NF000766">
    <property type="entry name" value="PRK00049.1"/>
    <property type="match status" value="1"/>
</dbReference>
<dbReference type="NCBIfam" id="NF009372">
    <property type="entry name" value="PRK12735.1"/>
    <property type="match status" value="1"/>
</dbReference>
<dbReference type="NCBIfam" id="NF009373">
    <property type="entry name" value="PRK12736.1"/>
    <property type="match status" value="1"/>
</dbReference>
<dbReference type="NCBIfam" id="TIGR00231">
    <property type="entry name" value="small_GTP"/>
    <property type="match status" value="1"/>
</dbReference>
<dbReference type="PANTHER" id="PTHR43721:SF22">
    <property type="entry name" value="ELONGATION FACTOR TU, MITOCHONDRIAL"/>
    <property type="match status" value="1"/>
</dbReference>
<dbReference type="PANTHER" id="PTHR43721">
    <property type="entry name" value="ELONGATION FACTOR TU-RELATED"/>
    <property type="match status" value="1"/>
</dbReference>
<dbReference type="Pfam" id="PF00009">
    <property type="entry name" value="GTP_EFTU"/>
    <property type="match status" value="1"/>
</dbReference>
<dbReference type="Pfam" id="PF03144">
    <property type="entry name" value="GTP_EFTU_D2"/>
    <property type="match status" value="1"/>
</dbReference>
<dbReference type="Pfam" id="PF03143">
    <property type="entry name" value="GTP_EFTU_D3"/>
    <property type="match status" value="1"/>
</dbReference>
<dbReference type="PRINTS" id="PR00315">
    <property type="entry name" value="ELONGATNFCT"/>
</dbReference>
<dbReference type="SUPFAM" id="SSF50465">
    <property type="entry name" value="EF-Tu/eEF-1alpha/eIF2-gamma C-terminal domain"/>
    <property type="match status" value="1"/>
</dbReference>
<dbReference type="SUPFAM" id="SSF52540">
    <property type="entry name" value="P-loop containing nucleoside triphosphate hydrolases"/>
    <property type="match status" value="1"/>
</dbReference>
<dbReference type="SUPFAM" id="SSF50447">
    <property type="entry name" value="Translation proteins"/>
    <property type="match status" value="1"/>
</dbReference>
<dbReference type="PROSITE" id="PS00301">
    <property type="entry name" value="G_TR_1"/>
    <property type="match status" value="1"/>
</dbReference>
<dbReference type="PROSITE" id="PS51722">
    <property type="entry name" value="G_TR_2"/>
    <property type="match status" value="1"/>
</dbReference>